<dbReference type="EC" id="2.8.1.13" evidence="1"/>
<dbReference type="EMBL" id="CP001657">
    <property type="protein sequence ID" value="ACT12910.1"/>
    <property type="molecule type" value="Genomic_DNA"/>
</dbReference>
<dbReference type="RefSeq" id="WP_015840112.1">
    <property type="nucleotide sequence ID" value="NC_012917.1"/>
</dbReference>
<dbReference type="SMR" id="C6DFW7"/>
<dbReference type="STRING" id="561230.PC1_1869"/>
<dbReference type="GeneID" id="67793867"/>
<dbReference type="KEGG" id="pct:PC1_1869"/>
<dbReference type="eggNOG" id="COG0482">
    <property type="taxonomic scope" value="Bacteria"/>
</dbReference>
<dbReference type="HOGENOM" id="CLU_035188_1_0_6"/>
<dbReference type="OrthoDB" id="9800696at2"/>
<dbReference type="Proteomes" id="UP000002736">
    <property type="component" value="Chromosome"/>
</dbReference>
<dbReference type="GO" id="GO:0005737">
    <property type="term" value="C:cytoplasm"/>
    <property type="evidence" value="ECO:0007669"/>
    <property type="project" value="UniProtKB-SubCell"/>
</dbReference>
<dbReference type="GO" id="GO:0005524">
    <property type="term" value="F:ATP binding"/>
    <property type="evidence" value="ECO:0007669"/>
    <property type="project" value="UniProtKB-KW"/>
</dbReference>
<dbReference type="GO" id="GO:0000049">
    <property type="term" value="F:tRNA binding"/>
    <property type="evidence" value="ECO:0007669"/>
    <property type="project" value="UniProtKB-KW"/>
</dbReference>
<dbReference type="GO" id="GO:0103016">
    <property type="term" value="F:tRNA-uridine 2-sulfurtransferase activity"/>
    <property type="evidence" value="ECO:0007669"/>
    <property type="project" value="UniProtKB-EC"/>
</dbReference>
<dbReference type="GO" id="GO:0002143">
    <property type="term" value="P:tRNA wobble position uridine thiolation"/>
    <property type="evidence" value="ECO:0007669"/>
    <property type="project" value="TreeGrafter"/>
</dbReference>
<dbReference type="CDD" id="cd01998">
    <property type="entry name" value="MnmA_TRMU-like"/>
    <property type="match status" value="1"/>
</dbReference>
<dbReference type="FunFam" id="2.30.30.280:FF:000001">
    <property type="entry name" value="tRNA-specific 2-thiouridylase MnmA"/>
    <property type="match status" value="1"/>
</dbReference>
<dbReference type="FunFam" id="2.40.30.10:FF:000023">
    <property type="entry name" value="tRNA-specific 2-thiouridylase MnmA"/>
    <property type="match status" value="1"/>
</dbReference>
<dbReference type="FunFam" id="3.40.50.620:FF:000004">
    <property type="entry name" value="tRNA-specific 2-thiouridylase MnmA"/>
    <property type="match status" value="1"/>
</dbReference>
<dbReference type="Gene3D" id="2.30.30.280">
    <property type="entry name" value="Adenine nucleotide alpha hydrolases-like domains"/>
    <property type="match status" value="1"/>
</dbReference>
<dbReference type="Gene3D" id="3.40.50.620">
    <property type="entry name" value="HUPs"/>
    <property type="match status" value="1"/>
</dbReference>
<dbReference type="Gene3D" id="2.40.30.10">
    <property type="entry name" value="Translation factors"/>
    <property type="match status" value="1"/>
</dbReference>
<dbReference type="HAMAP" id="MF_00144">
    <property type="entry name" value="tRNA_thiouridyl_MnmA"/>
    <property type="match status" value="1"/>
</dbReference>
<dbReference type="InterPro" id="IPR004506">
    <property type="entry name" value="MnmA-like"/>
</dbReference>
<dbReference type="InterPro" id="IPR046885">
    <property type="entry name" value="MnmA-like_C"/>
</dbReference>
<dbReference type="InterPro" id="IPR046884">
    <property type="entry name" value="MnmA-like_central"/>
</dbReference>
<dbReference type="InterPro" id="IPR023382">
    <property type="entry name" value="MnmA-like_central_sf"/>
</dbReference>
<dbReference type="InterPro" id="IPR014729">
    <property type="entry name" value="Rossmann-like_a/b/a_fold"/>
</dbReference>
<dbReference type="NCBIfam" id="NF001138">
    <property type="entry name" value="PRK00143.1"/>
    <property type="match status" value="1"/>
</dbReference>
<dbReference type="NCBIfam" id="TIGR00420">
    <property type="entry name" value="trmU"/>
    <property type="match status" value="1"/>
</dbReference>
<dbReference type="PANTHER" id="PTHR11933:SF5">
    <property type="entry name" value="MITOCHONDRIAL TRNA-SPECIFIC 2-THIOURIDYLASE 1"/>
    <property type="match status" value="1"/>
</dbReference>
<dbReference type="PANTHER" id="PTHR11933">
    <property type="entry name" value="TRNA 5-METHYLAMINOMETHYL-2-THIOURIDYLATE -METHYLTRANSFERASE"/>
    <property type="match status" value="1"/>
</dbReference>
<dbReference type="Pfam" id="PF03054">
    <property type="entry name" value="tRNA_Me_trans"/>
    <property type="match status" value="1"/>
</dbReference>
<dbReference type="Pfam" id="PF20258">
    <property type="entry name" value="tRNA_Me_trans_C"/>
    <property type="match status" value="1"/>
</dbReference>
<dbReference type="Pfam" id="PF20259">
    <property type="entry name" value="tRNA_Me_trans_M"/>
    <property type="match status" value="1"/>
</dbReference>
<dbReference type="SUPFAM" id="SSF52402">
    <property type="entry name" value="Adenine nucleotide alpha hydrolases-like"/>
    <property type="match status" value="1"/>
</dbReference>
<gene>
    <name evidence="1" type="primary">mnmA</name>
    <name type="ordered locus">PC1_1869</name>
</gene>
<feature type="chain" id="PRO_1000203309" description="tRNA-specific 2-thiouridylase MnmA">
    <location>
        <begin position="1"/>
        <end position="368"/>
    </location>
</feature>
<feature type="region of interest" description="Interaction with target base in tRNA" evidence="1">
    <location>
        <begin position="98"/>
        <end position="100"/>
    </location>
</feature>
<feature type="region of interest" description="Interaction with tRNA" evidence="1">
    <location>
        <begin position="150"/>
        <end position="152"/>
    </location>
</feature>
<feature type="region of interest" description="Interaction with tRNA" evidence="1">
    <location>
        <begin position="313"/>
        <end position="314"/>
    </location>
</feature>
<feature type="active site" description="Nucleophile" evidence="1">
    <location>
        <position position="103"/>
    </location>
</feature>
<feature type="active site" description="Cysteine persulfide intermediate" evidence="1">
    <location>
        <position position="200"/>
    </location>
</feature>
<feature type="binding site" evidence="1">
    <location>
        <begin position="12"/>
        <end position="19"/>
    </location>
    <ligand>
        <name>ATP</name>
        <dbReference type="ChEBI" id="CHEBI:30616"/>
    </ligand>
</feature>
<feature type="binding site" evidence="1">
    <location>
        <position position="38"/>
    </location>
    <ligand>
        <name>ATP</name>
        <dbReference type="ChEBI" id="CHEBI:30616"/>
    </ligand>
</feature>
<feature type="binding site" evidence="1">
    <location>
        <position position="128"/>
    </location>
    <ligand>
        <name>ATP</name>
        <dbReference type="ChEBI" id="CHEBI:30616"/>
    </ligand>
</feature>
<feature type="site" description="Interaction with tRNA" evidence="1">
    <location>
        <position position="129"/>
    </location>
</feature>
<feature type="site" description="Interaction with tRNA" evidence="1">
    <location>
        <position position="346"/>
    </location>
</feature>
<feature type="disulfide bond" description="Alternate" evidence="1">
    <location>
        <begin position="103"/>
        <end position="200"/>
    </location>
</feature>
<sequence>MSDNSQKKVIVGMSGGVDSSVSAYLLQQQGYHVEGLFMKNWEEDDDTEYCSAATDLADAQAVCDKLGIELHTVNFAAEYWDNVFELFLEEYKAGRTPNPDILCNKEIKFKAFLEFAAEDLGADYIATGHYVRRHDVDGKSRLLRGMDGNKDQSYFLYTLSHEQIAQSLFPVGELEKPQVRKIAEELELATAKKKDSTGICFIGERKFTDFLARYLPAQPGPILSVDDNKPMGQHQGLMYHTLGQRKGLGIGGVKDGGEDPWYVVDKDVANNILYVAQGHEHPRLMSHGLIAQQLHWVDRQPLTAELRCTVKTRYRQADIPCTVTPLGDDRITVRFDEPVAAVTPGQSAVFYLDDVCLGGGIIEERLQE</sequence>
<keyword id="KW-0067">ATP-binding</keyword>
<keyword id="KW-0963">Cytoplasm</keyword>
<keyword id="KW-1015">Disulfide bond</keyword>
<keyword id="KW-0547">Nucleotide-binding</keyword>
<keyword id="KW-0694">RNA-binding</keyword>
<keyword id="KW-0808">Transferase</keyword>
<keyword id="KW-0819">tRNA processing</keyword>
<keyword id="KW-0820">tRNA-binding</keyword>
<accession>C6DFW7</accession>
<reference key="1">
    <citation type="submission" date="2009-07" db="EMBL/GenBank/DDBJ databases">
        <title>Complete sequence of Pectobacterium carotovorum subsp. carotovorum PC1.</title>
        <authorList>
            <consortium name="US DOE Joint Genome Institute"/>
            <person name="Lucas S."/>
            <person name="Copeland A."/>
            <person name="Lapidus A."/>
            <person name="Glavina del Rio T."/>
            <person name="Tice H."/>
            <person name="Bruce D."/>
            <person name="Goodwin L."/>
            <person name="Pitluck S."/>
            <person name="Munk A.C."/>
            <person name="Brettin T."/>
            <person name="Detter J.C."/>
            <person name="Han C."/>
            <person name="Tapia R."/>
            <person name="Larimer F."/>
            <person name="Land M."/>
            <person name="Hauser L."/>
            <person name="Kyrpides N."/>
            <person name="Mikhailova N."/>
            <person name="Balakrishnan V."/>
            <person name="Glasner J."/>
            <person name="Perna N.T."/>
        </authorList>
    </citation>
    <scope>NUCLEOTIDE SEQUENCE [LARGE SCALE GENOMIC DNA]</scope>
    <source>
        <strain>PC1</strain>
    </source>
</reference>
<evidence type="ECO:0000255" key="1">
    <source>
        <dbReference type="HAMAP-Rule" id="MF_00144"/>
    </source>
</evidence>
<comment type="function">
    <text evidence="1">Catalyzes the 2-thiolation of uridine at the wobble position (U34) of tRNA(Lys), tRNA(Glu) and tRNA(Gln), leading to the formation of s(2)U34, the first step of tRNA-mnm(5)s(2)U34 synthesis. Sulfur is provided by IscS, via a sulfur-relay system. Binds ATP and its substrate tRNAs.</text>
</comment>
<comment type="catalytic activity">
    <reaction evidence="1">
        <text>S-sulfanyl-L-cysteinyl-[protein] + uridine(34) in tRNA + AH2 + ATP = 2-thiouridine(34) in tRNA + L-cysteinyl-[protein] + A + AMP + diphosphate + H(+)</text>
        <dbReference type="Rhea" id="RHEA:47032"/>
        <dbReference type="Rhea" id="RHEA-COMP:10131"/>
        <dbReference type="Rhea" id="RHEA-COMP:11726"/>
        <dbReference type="Rhea" id="RHEA-COMP:11727"/>
        <dbReference type="Rhea" id="RHEA-COMP:11728"/>
        <dbReference type="ChEBI" id="CHEBI:13193"/>
        <dbReference type="ChEBI" id="CHEBI:15378"/>
        <dbReference type="ChEBI" id="CHEBI:17499"/>
        <dbReference type="ChEBI" id="CHEBI:29950"/>
        <dbReference type="ChEBI" id="CHEBI:30616"/>
        <dbReference type="ChEBI" id="CHEBI:33019"/>
        <dbReference type="ChEBI" id="CHEBI:61963"/>
        <dbReference type="ChEBI" id="CHEBI:65315"/>
        <dbReference type="ChEBI" id="CHEBI:87170"/>
        <dbReference type="ChEBI" id="CHEBI:456215"/>
        <dbReference type="EC" id="2.8.1.13"/>
    </reaction>
</comment>
<comment type="subunit">
    <text evidence="1">Interacts with TusE.</text>
</comment>
<comment type="subcellular location">
    <subcellularLocation>
        <location evidence="1">Cytoplasm</location>
    </subcellularLocation>
</comment>
<comment type="similarity">
    <text evidence="1">Belongs to the MnmA/TRMU family.</text>
</comment>
<protein>
    <recommendedName>
        <fullName evidence="1">tRNA-specific 2-thiouridylase MnmA</fullName>
        <ecNumber evidence="1">2.8.1.13</ecNumber>
    </recommendedName>
</protein>
<name>MNMA_PECCP</name>
<organism>
    <name type="scientific">Pectobacterium carotovorum subsp. carotovorum (strain PC1)</name>
    <dbReference type="NCBI Taxonomy" id="561230"/>
    <lineage>
        <taxon>Bacteria</taxon>
        <taxon>Pseudomonadati</taxon>
        <taxon>Pseudomonadota</taxon>
        <taxon>Gammaproteobacteria</taxon>
        <taxon>Enterobacterales</taxon>
        <taxon>Pectobacteriaceae</taxon>
        <taxon>Pectobacterium</taxon>
    </lineage>
</organism>
<proteinExistence type="inferred from homology"/>